<sequence length="320" mass="34990">MTTSLVLNPRWPADTVMFVYENNLDDLNKNMEGLVGSGNFAASQCRNIMAHSAAAAALGGHPSGLVHSSTGYSTVDVTATSSNDTLTSSGKQCATGPCPAATVPHQSSSAATALPYSYFGNGYYPCRMGRGSLKSCTQAAGAALSSQYMDTTVNSDEYSNHRAKEFAFYHSYPSPYQSMASYLDVSVVQTLGAGEPRHDTLLPMDSYQPWALTNGWGGQMYCSKDQGQAGHLWKSALADVVAHQHDGSPFRRGRKKRIPYTKVQLKELEKEYAANKFITKDKRRKISAATNLSERQITIWFQNRRVKEKKFVAKVKSNAP</sequence>
<dbReference type="EMBL" id="DQ481665">
    <property type="protein sequence ID" value="ABF22411.1"/>
    <property type="molecule type" value="Genomic_DNA"/>
</dbReference>
<dbReference type="SMR" id="Q1KKY3"/>
<dbReference type="FunCoup" id="Q1KKY3">
    <property type="interactions" value="719"/>
</dbReference>
<dbReference type="STRING" id="31033.ENSTRUP00000052292"/>
<dbReference type="Ensembl" id="ENSTRUT00000058245.2">
    <property type="protein sequence ID" value="ENSTRUP00000052292.1"/>
    <property type="gene ID" value="ENSTRUG00000023485.2"/>
</dbReference>
<dbReference type="GeneID" id="101072102"/>
<dbReference type="KEGG" id="tru:101072102"/>
<dbReference type="CTD" id="559921"/>
<dbReference type="eggNOG" id="KOG0487">
    <property type="taxonomic scope" value="Eukaryota"/>
</dbReference>
<dbReference type="GeneTree" id="ENSGT00940000159029"/>
<dbReference type="InParanoid" id="Q1KKY3"/>
<dbReference type="OMA" id="WALNGWN"/>
<dbReference type="OrthoDB" id="6159439at2759"/>
<dbReference type="TreeFam" id="TF330813"/>
<dbReference type="Proteomes" id="UP000005226">
    <property type="component" value="Chromosome 5"/>
</dbReference>
<dbReference type="GO" id="GO:0005634">
    <property type="term" value="C:nucleus"/>
    <property type="evidence" value="ECO:0007669"/>
    <property type="project" value="UniProtKB-SubCell"/>
</dbReference>
<dbReference type="GO" id="GO:0003677">
    <property type="term" value="F:DNA binding"/>
    <property type="evidence" value="ECO:0007669"/>
    <property type="project" value="UniProtKB-KW"/>
</dbReference>
<dbReference type="GO" id="GO:0000981">
    <property type="term" value="F:DNA-binding transcription factor activity, RNA polymerase II-specific"/>
    <property type="evidence" value="ECO:0007669"/>
    <property type="project" value="InterPro"/>
</dbReference>
<dbReference type="CDD" id="cd00086">
    <property type="entry name" value="homeodomain"/>
    <property type="match status" value="1"/>
</dbReference>
<dbReference type="FunFam" id="1.10.10.60:FF:000130">
    <property type="entry name" value="Homeobox protein Hox-D12"/>
    <property type="match status" value="1"/>
</dbReference>
<dbReference type="Gene3D" id="1.10.10.60">
    <property type="entry name" value="Homeodomain-like"/>
    <property type="match status" value="1"/>
</dbReference>
<dbReference type="InterPro" id="IPR051003">
    <property type="entry name" value="AP_axis_regulatory_Homeobox"/>
</dbReference>
<dbReference type="InterPro" id="IPR001356">
    <property type="entry name" value="HD"/>
</dbReference>
<dbReference type="InterPro" id="IPR017970">
    <property type="entry name" value="Homeobox_CS"/>
</dbReference>
<dbReference type="InterPro" id="IPR009057">
    <property type="entry name" value="Homeodomain-like_sf"/>
</dbReference>
<dbReference type="InterPro" id="IPR022067">
    <property type="entry name" value="HoxA13_N"/>
</dbReference>
<dbReference type="PANTHER" id="PTHR45804:SF6">
    <property type="entry name" value="HOMEOBOX PROTEIN HOX-B13"/>
    <property type="match status" value="1"/>
</dbReference>
<dbReference type="PANTHER" id="PTHR45804">
    <property type="entry name" value="SEGMENTATION PROTEIN FUSHI TARAZU-LIKE PROTEIN"/>
    <property type="match status" value="1"/>
</dbReference>
<dbReference type="Pfam" id="PF00046">
    <property type="entry name" value="Homeodomain"/>
    <property type="match status" value="1"/>
</dbReference>
<dbReference type="Pfam" id="PF12284">
    <property type="entry name" value="HoxA13_N"/>
    <property type="match status" value="1"/>
</dbReference>
<dbReference type="SMART" id="SM00389">
    <property type="entry name" value="HOX"/>
    <property type="match status" value="1"/>
</dbReference>
<dbReference type="SUPFAM" id="SSF46689">
    <property type="entry name" value="Homeodomain-like"/>
    <property type="match status" value="1"/>
</dbReference>
<dbReference type="PROSITE" id="PS00027">
    <property type="entry name" value="HOMEOBOX_1"/>
    <property type="match status" value="1"/>
</dbReference>
<dbReference type="PROSITE" id="PS50071">
    <property type="entry name" value="HOMEOBOX_2"/>
    <property type="match status" value="1"/>
</dbReference>
<protein>
    <recommendedName>
        <fullName>Homeobox protein Hox-B13a</fullName>
    </recommendedName>
</protein>
<keyword id="KW-0217">Developmental protein</keyword>
<keyword id="KW-0238">DNA-binding</keyword>
<keyword id="KW-0371">Homeobox</keyword>
<keyword id="KW-0539">Nucleus</keyword>
<keyword id="KW-1185">Reference proteome</keyword>
<keyword id="KW-0804">Transcription</keyword>
<keyword id="KW-0805">Transcription regulation</keyword>
<comment type="function">
    <text evidence="1">Sequence-specific transcription factor which is part of a developmental regulatory system that provides cells with specific positional identities on the anterior-posterior axis.</text>
</comment>
<comment type="subcellular location">
    <subcellularLocation>
        <location evidence="2">Nucleus</location>
    </subcellularLocation>
</comment>
<comment type="similarity">
    <text evidence="3">Belongs to the Abd-B homeobox family.</text>
</comment>
<gene>
    <name type="primary">hoxb13a</name>
</gene>
<reference key="1">
    <citation type="journal article" date="2006" name="Proc. Natl. Acad. Sci. U.S.A.">
        <title>Highly conserved syntenic blocks at the vertebrate Hox loci and conserved regulatory elements within and outside Hox gene clusters.</title>
        <authorList>
            <person name="Lee A.P."/>
            <person name="Koh E.G.L."/>
            <person name="Tay A."/>
            <person name="Brenner S."/>
            <person name="Venkatesh B."/>
        </authorList>
    </citation>
    <scope>NUCLEOTIDE SEQUENCE [GENOMIC DNA]</scope>
</reference>
<proteinExistence type="inferred from homology"/>
<organism>
    <name type="scientific">Takifugu rubripes</name>
    <name type="common">Japanese pufferfish</name>
    <name type="synonym">Fugu rubripes</name>
    <dbReference type="NCBI Taxonomy" id="31033"/>
    <lineage>
        <taxon>Eukaryota</taxon>
        <taxon>Metazoa</taxon>
        <taxon>Chordata</taxon>
        <taxon>Craniata</taxon>
        <taxon>Vertebrata</taxon>
        <taxon>Euteleostomi</taxon>
        <taxon>Actinopterygii</taxon>
        <taxon>Neopterygii</taxon>
        <taxon>Teleostei</taxon>
        <taxon>Neoteleostei</taxon>
        <taxon>Acanthomorphata</taxon>
        <taxon>Eupercaria</taxon>
        <taxon>Tetraodontiformes</taxon>
        <taxon>Tetradontoidea</taxon>
        <taxon>Tetraodontidae</taxon>
        <taxon>Takifugu</taxon>
    </lineage>
</organism>
<name>HXBDA_TAKRU</name>
<feature type="chain" id="PRO_0000265985" description="Homeobox protein Hox-B13a">
    <location>
        <begin position="1"/>
        <end position="320"/>
    </location>
</feature>
<feature type="DNA-binding region" description="Homeobox" evidence="2">
    <location>
        <begin position="253"/>
        <end position="312"/>
    </location>
</feature>
<evidence type="ECO:0000250" key="1"/>
<evidence type="ECO:0000255" key="2">
    <source>
        <dbReference type="PROSITE-ProRule" id="PRU00108"/>
    </source>
</evidence>
<evidence type="ECO:0000305" key="3"/>
<accession>Q1KKY3</accession>